<reference key="1">
    <citation type="journal article" date="1995" name="J. Biol. Chem.">
        <title>Cloning of an SNF2/SWI2-related protein that binds specifically to the SPH motifs of the SV40 enhancer and to the HIV-1 promoter.</title>
        <authorList>
            <person name="Sheridan P.L."/>
            <person name="Schorpp M."/>
            <person name="Voz M.L."/>
            <person name="Jones K.A."/>
        </authorList>
    </citation>
    <scope>NUCLEOTIDE SEQUENCE [MRNA]</scope>
    <scope>FUNCTION</scope>
    <source>
        <tissue>Cervix carcinoma</tissue>
    </source>
</reference>
<reference key="2">
    <citation type="journal article" date="1996" name="DNA Cell Biol.">
        <title>Characterization of a helicase-like transcription factor involved in the expression of the human plasminogen activator inhibitor-1 gene.</title>
        <authorList>
            <person name="Ding H."/>
            <person name="Descheemaeker K."/>
            <person name="Marynen P."/>
            <person name="Nelles L."/>
            <person name="Carvalho T."/>
            <person name="Carmo-Fonseca M."/>
            <person name="Collen D."/>
            <person name="Belayew A."/>
        </authorList>
    </citation>
    <scope>NUCLEOTIDE SEQUENCE [MRNA] (ISOFORMS 1 AND 2)</scope>
    <scope>FUNCTION</scope>
    <scope>ALTERNATIVE INITIATION</scope>
    <scope>SUBCELLULAR LOCATION</scope>
    <scope>TISSUE SPECIFICITY</scope>
</reference>
<reference key="3">
    <citation type="submission" date="2001-10" db="EMBL/GenBank/DDBJ databases">
        <title>Characterization of the human SMARCA3/HLTF gene.</title>
        <authorList>
            <person name="Ribaucour F."/>
            <person name="Wiedig M."/>
            <person name="Benotmane A.M."/>
            <person name="Coppee F."/>
            <person name="Belayew A."/>
        </authorList>
    </citation>
    <scope>NUCLEOTIDE SEQUENCE [GENOMIC DNA]</scope>
</reference>
<reference key="4">
    <citation type="submission" date="2005-09" db="EMBL/GenBank/DDBJ databases">
        <authorList>
            <person name="Mural R.J."/>
            <person name="Istrail S."/>
            <person name="Sutton G.G."/>
            <person name="Florea L."/>
            <person name="Halpern A.L."/>
            <person name="Mobarry C.M."/>
            <person name="Lippert R."/>
            <person name="Walenz B."/>
            <person name="Shatkay H."/>
            <person name="Dew I."/>
            <person name="Miller J.R."/>
            <person name="Flanigan M.J."/>
            <person name="Edwards N.J."/>
            <person name="Bolanos R."/>
            <person name="Fasulo D."/>
            <person name="Halldorsson B.V."/>
            <person name="Hannenhalli S."/>
            <person name="Turner R."/>
            <person name="Yooseph S."/>
            <person name="Lu F."/>
            <person name="Nusskern D.R."/>
            <person name="Shue B.C."/>
            <person name="Zheng X.H."/>
            <person name="Zhong F."/>
            <person name="Delcher A.L."/>
            <person name="Huson D.H."/>
            <person name="Kravitz S.A."/>
            <person name="Mouchard L."/>
            <person name="Reinert K."/>
            <person name="Remington K.A."/>
            <person name="Clark A.G."/>
            <person name="Waterman M.S."/>
            <person name="Eichler E.E."/>
            <person name="Adams M.D."/>
            <person name="Hunkapiller M.W."/>
            <person name="Myers E.W."/>
            <person name="Venter J.C."/>
        </authorList>
    </citation>
    <scope>NUCLEOTIDE SEQUENCE [LARGE SCALE GENOMIC DNA]</scope>
</reference>
<reference key="5">
    <citation type="journal article" date="2004" name="Genome Res.">
        <title>The status, quality, and expansion of the NIH full-length cDNA project: the Mammalian Gene Collection (MGC).</title>
        <authorList>
            <consortium name="The MGC Project Team"/>
        </authorList>
    </citation>
    <scope>NUCLEOTIDE SEQUENCE [LARGE SCALE MRNA]</scope>
    <source>
        <tissue>Testis</tissue>
    </source>
</reference>
<reference key="6">
    <citation type="journal article" date="1993" name="Verh. K. Acad. Geneeskd. Belg.">
        <title>On the regulation of the plasminogen activator inhibitor-1 gene expression.</title>
        <authorList>
            <person name="Descheemaeker K."/>
        </authorList>
    </citation>
    <scope>NUCLEOTIDE SEQUENCE [MRNA] OF 38-213</scope>
</reference>
<reference key="7">
    <citation type="journal article" date="1997" name="Dev. Biol.">
        <title>Developmental regulation of Zbu1, a DNA-binding member of the SWI2/SNF2 family.</title>
        <authorList>
            <person name="Gong X."/>
            <person name="Kaushal S."/>
            <person name="Ceccarelli E."/>
            <person name="Bogdanova N."/>
            <person name="Neville C."/>
            <person name="Nguyen T."/>
            <person name="Clark H."/>
            <person name="Khatib Z.A."/>
            <person name="Valentine M."/>
            <person name="Look A.T."/>
            <person name="Rosenthal N."/>
        </authorList>
    </citation>
    <scope>FUNCTION</scope>
    <scope>TISSUE SPECIFICITY</scope>
</reference>
<reference key="8">
    <citation type="journal article" date="1999" name="J. Biol. Chem.">
        <title>Functional interactions between Sp1 or Sp3 and the helicase-like transcription factor mediate basal expression from the human plasminogen activator inhibitor-1 gene.</title>
        <authorList>
            <person name="Ding H."/>
            <person name="Benotmane A.M."/>
            <person name="Suske G."/>
            <person name="Collen D."/>
            <person name="Belayew A."/>
        </authorList>
    </citation>
    <scope>FUNCTION</scope>
    <scope>INTERACTION WITH SP1 AND SP3</scope>
</reference>
<reference key="9">
    <citation type="journal article" date="2002" name="Proc. Natl. Acad. Sci. U.S.A.">
        <title>HLTF gene silencing in human colon cancer.</title>
        <authorList>
            <person name="Moinova H.R."/>
            <person name="Chen W.-D."/>
            <person name="Shen L."/>
            <person name="Smiraglia D."/>
            <person name="Olechnowicz J."/>
            <person name="Ravi L."/>
            <person name="Kasturi L."/>
            <person name="Myeroff L."/>
            <person name="Plass C."/>
            <person name="Parsons R."/>
            <person name="Minna J."/>
            <person name="Willson J.K.V."/>
            <person name="Green S.B."/>
            <person name="Issa J.-P."/>
            <person name="Markowitz S.D."/>
        </authorList>
    </citation>
    <scope>EPIGENETIC INACTIVATION IN COLON CANCER</scope>
</reference>
<reference key="10">
    <citation type="journal article" date="2008" name="Mol. Cell">
        <title>Kinase-selective enrichment enables quantitative phosphoproteomics of the kinome across the cell cycle.</title>
        <authorList>
            <person name="Daub H."/>
            <person name="Olsen J.V."/>
            <person name="Bairlein M."/>
            <person name="Gnad F."/>
            <person name="Oppermann F.S."/>
            <person name="Korner R."/>
            <person name="Greff Z."/>
            <person name="Keri G."/>
            <person name="Stemmann O."/>
            <person name="Mann M."/>
        </authorList>
    </citation>
    <scope>IDENTIFICATION BY MASS SPECTROMETRY [LARGE SCALE ANALYSIS]</scope>
    <source>
        <tissue>Cervix carcinoma</tissue>
    </source>
</reference>
<reference key="11">
    <citation type="journal article" date="2008" name="Proc. Natl. Acad. Sci. U.S.A.">
        <title>A quantitative atlas of mitotic phosphorylation.</title>
        <authorList>
            <person name="Dephoure N."/>
            <person name="Zhou C."/>
            <person name="Villen J."/>
            <person name="Beausoleil S.A."/>
            <person name="Bakalarski C.E."/>
            <person name="Elledge S.J."/>
            <person name="Gygi S.P."/>
        </authorList>
    </citation>
    <scope>PHOSPHORYLATION [LARGE SCALE ANALYSIS] AT SER-397; SER-398; SER-400 AND THR-736</scope>
    <scope>IDENTIFICATION BY MASS SPECTROMETRY [LARGE SCALE ANALYSIS]</scope>
    <source>
        <tissue>Cervix carcinoma</tissue>
    </source>
</reference>
<reference key="12">
    <citation type="journal article" date="2008" name="Proc. Natl. Acad. Sci. U.S.A.">
        <title>Human HLTF functions as a ubiquitin ligase for proliferating cell nuclear antigen polyubiquitination.</title>
        <authorList>
            <person name="Unk I."/>
            <person name="Hajdu I."/>
            <person name="Fatyol K."/>
            <person name="Hurwitz J."/>
            <person name="Yoon J.-H."/>
            <person name="Prakash L."/>
            <person name="Prakash S."/>
            <person name="Haracska L."/>
        </authorList>
    </citation>
    <scope>FUNCTION AS AN E3 UBIQUITIN-PROTEIN LIGASE</scope>
    <scope>INTERACTION WITH PCNA; UBE2N AND RAD18</scope>
</reference>
<reference key="13">
    <citation type="journal article" date="2008" name="Proc. Natl. Acad. Sci. U.S.A.">
        <title>Polyubiquitination of proliferating cell nuclear antigen by HLTF and SHPRH prevents genomic instability from stalled replication forks.</title>
        <authorList>
            <person name="Motegi A."/>
            <person name="Liaw H.-J."/>
            <person name="Lee K.-Y."/>
            <person name="Roest H.P."/>
            <person name="Maas A."/>
            <person name="Wu X."/>
            <person name="Moinova H."/>
            <person name="Markowitz S.D."/>
            <person name="Ding H."/>
            <person name="Hoeijmakers J.H.J."/>
            <person name="Myung K."/>
        </authorList>
    </citation>
    <scope>FUNCTION AS AN E3 UBIQUITIN-PROTEIN LIGASE</scope>
    <scope>INTERACTION WITH PCNA; RAD18; SHPRH AND UBE2N</scope>
</reference>
<reference key="14">
    <citation type="journal article" date="2009" name="Sci. Signal.">
        <title>Quantitative phosphoproteomic analysis of T cell receptor signaling reveals system-wide modulation of protein-protein interactions.</title>
        <authorList>
            <person name="Mayya V."/>
            <person name="Lundgren D.H."/>
            <person name="Hwang S.-I."/>
            <person name="Rezaul K."/>
            <person name="Wu L."/>
            <person name="Eng J.K."/>
            <person name="Rodionov V."/>
            <person name="Han D.K."/>
        </authorList>
    </citation>
    <scope>IDENTIFICATION BY MASS SPECTROMETRY [LARGE SCALE ANALYSIS]</scope>
    <source>
        <tissue>Leukemic T-cell</tissue>
    </source>
</reference>
<reference key="15">
    <citation type="journal article" date="2010" name="Sci. Signal.">
        <title>Quantitative phosphoproteomics reveals widespread full phosphorylation site occupancy during mitosis.</title>
        <authorList>
            <person name="Olsen J.V."/>
            <person name="Vermeulen M."/>
            <person name="Santamaria A."/>
            <person name="Kumar C."/>
            <person name="Miller M.L."/>
            <person name="Jensen L.J."/>
            <person name="Gnad F."/>
            <person name="Cox J."/>
            <person name="Jensen T.S."/>
            <person name="Nigg E.A."/>
            <person name="Brunak S."/>
            <person name="Mann M."/>
        </authorList>
    </citation>
    <scope>IDENTIFICATION BY MASS SPECTROMETRY [LARGE SCALE ANALYSIS]</scope>
    <source>
        <tissue>Cervix carcinoma</tissue>
    </source>
</reference>
<reference key="16">
    <citation type="journal article" date="2011" name="BMC Syst. Biol.">
        <title>Initial characterization of the human central proteome.</title>
        <authorList>
            <person name="Burkard T.R."/>
            <person name="Planyavsky M."/>
            <person name="Kaupe I."/>
            <person name="Breitwieser F.P."/>
            <person name="Buerckstuemmer T."/>
            <person name="Bennett K.L."/>
            <person name="Superti-Furga G."/>
            <person name="Colinge J."/>
        </authorList>
    </citation>
    <scope>IDENTIFICATION BY MASS SPECTROMETRY [LARGE SCALE ANALYSIS]</scope>
</reference>
<reference key="17">
    <citation type="journal article" date="2011" name="Mol. Cell. Endocrinol.">
        <title>Prolactin induces Jak2 phosphorylation of RUSHY195.</title>
        <authorList>
            <person name="Helmer R.A."/>
            <person name="Dertien J.S."/>
            <person name="Chilton B.S."/>
        </authorList>
    </citation>
    <scope>PHOSPHORYLATION AT TYR-195</scope>
</reference>
<reference key="18">
    <citation type="journal article" date="2014" name="Mol. Cell. Proteomics">
        <title>Immunoaffinity enrichment and mass spectrometry analysis of protein methylation.</title>
        <authorList>
            <person name="Guo A."/>
            <person name="Gu H."/>
            <person name="Zhou J."/>
            <person name="Mulhern D."/>
            <person name="Wang Y."/>
            <person name="Lee K.A."/>
            <person name="Yang V."/>
            <person name="Aguiar M."/>
            <person name="Kornhauser J."/>
            <person name="Jia X."/>
            <person name="Ren J."/>
            <person name="Beausoleil S.A."/>
            <person name="Silva J.C."/>
            <person name="Vemulapalli V."/>
            <person name="Bedford M.T."/>
            <person name="Comb M.J."/>
        </authorList>
    </citation>
    <scope>METHYLATION [LARGE SCALE ANALYSIS] AT ARG-27</scope>
    <scope>IDENTIFICATION BY MASS SPECTROMETRY [LARGE SCALE ANALYSIS]</scope>
    <source>
        <tissue>Colon carcinoma</tissue>
    </source>
</reference>
<reference key="19">
    <citation type="journal article" date="2017" name="Nat. Struct. Mol. Biol.">
        <title>Site-specific mapping of the human SUMO proteome reveals co-modification with phosphorylation.</title>
        <authorList>
            <person name="Hendriks I.A."/>
            <person name="Lyon D."/>
            <person name="Young C."/>
            <person name="Jensen L.J."/>
            <person name="Vertegaal A.C."/>
            <person name="Nielsen M.L."/>
        </authorList>
    </citation>
    <scope>SUMOYLATION [LARGE SCALE ANALYSIS] AT LYS-112 AND LYS-211</scope>
    <scope>IDENTIFICATION BY MASS SPECTROMETRY [LARGE SCALE ANALYSIS]</scope>
</reference>
<reference key="20">
    <citation type="submission" date="2010-10" db="PDB data bank">
        <title>NMR structure of the HLTF hiran domain.</title>
        <authorList>
            <consortium name="Structural genomics consortium (SGC)"/>
        </authorList>
    </citation>
    <scope>STRUCTURE BY NMR OF 51-171</scope>
</reference>
<protein>
    <recommendedName>
        <fullName>Helicase-like transcription factor</fullName>
        <ecNumber>2.3.2.27</ecNumber>
        <ecNumber>3.6.4.-</ecNumber>
    </recommendedName>
    <alternativeName>
        <fullName>DNA-binding protein/plasminogen activator inhibitor 1 regulator</fullName>
    </alternativeName>
    <alternativeName>
        <fullName>HIP116</fullName>
    </alternativeName>
    <alternativeName>
        <fullName>RING finger protein 80</fullName>
    </alternativeName>
    <alternativeName>
        <fullName evidence="14">RING-type E3 ubiquitin transferase HLTF</fullName>
    </alternativeName>
    <alternativeName>
        <fullName>SWI/SNF-related matrix-associated actin-dependent regulator of chromatin subfamily A member 3</fullName>
    </alternativeName>
    <alternativeName>
        <fullName>Sucrose nonfermenting protein 2-like 3</fullName>
    </alternativeName>
</protein>
<proteinExistence type="evidence at protein level"/>
<accession>Q14527</accession>
<accession>D3DNH3</accession>
<accession>Q14536</accession>
<accession>Q16051</accession>
<accession>Q7KYJ6</accession>
<accession>Q86YA5</accession>
<accession>Q92652</accession>
<accession>Q96KM9</accession>
<keyword id="KW-0002">3D-structure</keyword>
<keyword id="KW-0010">Activator</keyword>
<keyword id="KW-0024">Alternative initiation</keyword>
<keyword id="KW-0067">ATP-binding</keyword>
<keyword id="KW-0156">Chromatin regulator</keyword>
<keyword id="KW-0963">Cytoplasm</keyword>
<keyword id="KW-0238">DNA-binding</keyword>
<keyword id="KW-0347">Helicase</keyword>
<keyword id="KW-0378">Hydrolase</keyword>
<keyword id="KW-1017">Isopeptide bond</keyword>
<keyword id="KW-0479">Metal-binding</keyword>
<keyword id="KW-0488">Methylation</keyword>
<keyword id="KW-0511">Multifunctional enzyme</keyword>
<keyword id="KW-0547">Nucleotide-binding</keyword>
<keyword id="KW-0539">Nucleus</keyword>
<keyword id="KW-0597">Phosphoprotein</keyword>
<keyword id="KW-1267">Proteomics identification</keyword>
<keyword id="KW-1185">Reference proteome</keyword>
<keyword id="KW-0804">Transcription</keyword>
<keyword id="KW-0808">Transferase</keyword>
<keyword id="KW-0832">Ubl conjugation</keyword>
<keyword id="KW-0833">Ubl conjugation pathway</keyword>
<keyword id="KW-0862">Zinc</keyword>
<keyword id="KW-0863">Zinc-finger</keyword>
<sequence>MSWMFKRDPVWKYLQTVQYGVHGNFPRLSYPTFFPRFEFQDVIPPDDFLTSDEEVDSVLFGSLRGHVVGLRYYTGVVNNNEMVALQRDPNNPYDKNAIKVNNVNGNQVGHLKKELAGALAYIMDNKLAQIEGVVPFGANNAFTMPLHMTFWGKEENRKAVSDQLKKHGFKLGPAPKTLGFNLESGWGSGRAGPSYSMPVHAAVQMTTEQLKTEFDKLFEDLKEDDKTHEMEPAEAIETPLLPHQKQALAWMVSRENSKELPPFWEQRNDLYYNTITNFSEKDRPENVHGGILADDMGLGKTLTAIAVILTNFHDGRPLPIERVKKNLLKKEYNVNDDSMKLGGNNTSEKADGLSKDASRCSEQPSISDIKEKSKFRMSELSSSRPKRRKTAVQYIESSDSEEIETSELPQKMKGKLKNVQSETKGRAKAGSSKVIEDVAFACALTSSVPTTKKKMLKKGACAVEGSKKTDVEERPRTTLIICPLSVLSNWIDQFGQHIKSDVHLNFYVYYGPDRIREPALLSKQDIVLTTYNILTHDYGTKGDSPLHSIRWLRVILDEGHAIRNPNAQQTKAVLDLESERRWVLTGTPIQNSLKDLWSLLSFLKLKPFIDREWWHRTIQRPVTMGDEGGLRRLQSLIKNITLRRTKTSKIKGKPVLELPERKVFIQHITLSDEERKIYQSVKNEGRATIGRYFNEGTVLAHYADVLGLLLRLRQICCHTYLLTNAVSSNGPSGNDTPEELRKKLIRKMKLILSSGSDEECAICLDSLTVPVITHCAHVFCKPCICQVIQNEQPHAKCPLCRNDIHEDNLLECPPEELARDSEKKSDMEWTSSSKINALMHALTDLRKKNPNIKSLVVSQFTTFLSLIEIPLKASGFVFTRLDGSMAQKKRVESIQCFQNTEAGSPTIMLLSLKAGGVGLNLSAASRVFLMDPAWNPAAEDQCFDRCHRLGQKQEVIITKFIVKDSVEENMLKIQNKKRELAAGAFGTKKPNADEMKQAKINEIRTLIDL</sequence>
<gene>
    <name type="primary">HLTF</name>
    <name type="synonym">HIP116A</name>
    <name type="synonym">RNF80</name>
    <name type="synonym">SMARCA3</name>
    <name type="synonym">SNF2L3</name>
    <name type="synonym">ZBU1</name>
</gene>
<organism>
    <name type="scientific">Homo sapiens</name>
    <name type="common">Human</name>
    <dbReference type="NCBI Taxonomy" id="9606"/>
    <lineage>
        <taxon>Eukaryota</taxon>
        <taxon>Metazoa</taxon>
        <taxon>Chordata</taxon>
        <taxon>Craniata</taxon>
        <taxon>Vertebrata</taxon>
        <taxon>Euteleostomi</taxon>
        <taxon>Mammalia</taxon>
        <taxon>Eutheria</taxon>
        <taxon>Euarchontoglires</taxon>
        <taxon>Primates</taxon>
        <taxon>Haplorrhini</taxon>
        <taxon>Catarrhini</taxon>
        <taxon>Hominidae</taxon>
        <taxon>Homo</taxon>
    </lineage>
</organism>
<comment type="function">
    <text evidence="1 6 7 8 10 11 12">Has both helicase and E3 ubiquitin ligase activities. Possesses intrinsic ATP-dependent nucleosome-remodeling activity; This activity may be required for transcriptional activation or repression of specific target promoters (By similarity). These may include the SERPINE1 and HIV-1 promoters and the SV40 enhancer, to which this protein can bind directly. Plays a role in error-free postreplication repair (PRR) of damaged DNA and maintains genomic stability through acting as a ubiquitin ligase for 'Lys-63'-linked polyubiquitination of chromatin-bound PCNA.</text>
</comment>
<comment type="catalytic activity">
    <reaction>
        <text>S-ubiquitinyl-[E2 ubiquitin-conjugating enzyme]-L-cysteine + [acceptor protein]-L-lysine = [E2 ubiquitin-conjugating enzyme]-L-cysteine + N(6)-ubiquitinyl-[acceptor protein]-L-lysine.</text>
        <dbReference type="EC" id="2.3.2.27"/>
    </reaction>
</comment>
<comment type="pathway">
    <text>Protein modification; protein ubiquitination.</text>
</comment>
<comment type="subunit">
    <text evidence="1 6 7 8">Interacts with SP1 and SP3 independently of DNA; the interaction with these transcriptional factors may be required for basal transcription of target genes. Interacts with EGR1; the interaction requires prior binding to DNA and represses c-Rel via a DNA looping mechanism (By similarity). Interacts with GATA4 (By similarity). Interacts with PCNA; the interaction promotes polyubiquitination of PCNA through association with the UBE2B-RAD18 and UBE2V2-UBE2N ubiquitin ligase complexes. Interacts with RAD18, SHPRH, UBE2V2 and UBE2N.</text>
</comment>
<comment type="interaction">
    <interactant intactId="EBI-1045161">
        <id>Q14527</id>
    </interactant>
    <interactant intactId="EBI-358311">
        <id>P12004</id>
        <label>PCNA</label>
    </interactant>
    <organismsDiffer>false</organismsDiffer>
    <experiments>2</experiments>
</comment>
<comment type="interaction">
    <interactant intactId="EBI-1045161">
        <id>Q14527</id>
    </interactant>
    <interactant intactId="EBI-2339393">
        <id>Q9NS91</id>
        <label>RAD18</label>
    </interactant>
    <organismsDiffer>false</organismsDiffer>
    <experiments>3</experiments>
</comment>
<comment type="interaction">
    <interactant intactId="EBI-1045161">
        <id>Q14527</id>
    </interactant>
    <interactant intactId="EBI-717048">
        <id>P60903</id>
        <label>S100A10</label>
    </interactant>
    <organismsDiffer>false</organismsDiffer>
    <experiments>2</experiments>
</comment>
<comment type="interaction">
    <interactant intactId="EBI-1045161">
        <id>Q14527</id>
    </interactant>
    <interactant intactId="EBI-1052908">
        <id>P61088</id>
        <label>UBE2N</label>
    </interactant>
    <organismsDiffer>false</organismsDiffer>
    <experiments>4</experiments>
</comment>
<comment type="subcellular location">
    <subcellularLocation>
        <location evidence="1">Cytoplasm</location>
    </subcellularLocation>
    <subcellularLocation>
        <location evidence="11">Nucleus</location>
    </subcellularLocation>
    <subcellularLocation>
        <location evidence="1">Nucleus</location>
        <location evidence="1">Nucleolus</location>
    </subcellularLocation>
    <subcellularLocation>
        <location evidence="1">Nucleus</location>
        <location evidence="1">Nucleoplasm</location>
    </subcellularLocation>
    <text evidence="1">Nuclear localization is stimulated by progesterone.</text>
</comment>
<comment type="alternative products">
    <event type="alternative initiation"/>
    <isoform>
        <id>Q14527-1</id>
        <name>1</name>
        <sequence type="displayed"/>
    </isoform>
    <isoform>
        <id>Q14527-2</id>
        <name>2</name>
        <sequence type="described" ref="VSP_018873"/>
    </isoform>
</comment>
<comment type="tissue specificity">
    <text evidence="11 12">Expressed in brain, heart, kidney, liver, lung, pancreas, placenta and skeletal muscle.</text>
</comment>
<comment type="miscellaneous">
    <text>Subject to frequent epigenetic inactivation by promoter methylation in colon cancer.</text>
</comment>
<comment type="similarity">
    <text evidence="14">Belongs to the SNF2/RAD54 helicase family. RAD16 subfamily.</text>
</comment>
<comment type="caution">
    <text evidence="14">In contrast with other SMARC proteins, there is currently no evidence that it associates with actin or actin-related proteins. It may rather act as a sequence-specific DNA binding ATPase, whose precise function remains to be fully characterized.</text>
</comment>
<comment type="online information" name="Atlas of Genetics and Cytogenetics in Oncology and Haematology">
    <link uri="https://atlasgeneticsoncology.org/gene/42332/HLTF"/>
</comment>
<name>HLTF_HUMAN</name>
<dbReference type="EC" id="2.3.2.27"/>
<dbReference type="EC" id="3.6.4.-"/>
<dbReference type="EMBL" id="L34673">
    <property type="protein sequence ID" value="AAA67436.1"/>
    <property type="molecule type" value="mRNA"/>
</dbReference>
<dbReference type="EMBL" id="Z46606">
    <property type="protein sequence ID" value="CAA86571.1"/>
    <property type="molecule type" value="mRNA"/>
</dbReference>
<dbReference type="EMBL" id="Z46606">
    <property type="protein sequence ID" value="CAA86572.1"/>
    <property type="molecule type" value="mRNA"/>
</dbReference>
<dbReference type="EMBL" id="AJ418064">
    <property type="protein sequence ID" value="CAD10805.1"/>
    <property type="molecule type" value="Genomic_DNA"/>
</dbReference>
<dbReference type="EMBL" id="CH471052">
    <property type="protein sequence ID" value="EAW78889.1"/>
    <property type="molecule type" value="Genomic_DNA"/>
</dbReference>
<dbReference type="EMBL" id="CH471052">
    <property type="protein sequence ID" value="EAW78892.1"/>
    <property type="molecule type" value="Genomic_DNA"/>
</dbReference>
<dbReference type="EMBL" id="CH471052">
    <property type="protein sequence ID" value="EAW78893.1"/>
    <property type="molecule type" value="Genomic_DNA"/>
</dbReference>
<dbReference type="EMBL" id="BC044659">
    <property type="protein sequence ID" value="AAH44659.1"/>
    <property type="molecule type" value="mRNA"/>
</dbReference>
<dbReference type="EMBL" id="S64671">
    <property type="protein sequence ID" value="AAB27691.1"/>
    <property type="molecule type" value="mRNA"/>
</dbReference>
<dbReference type="CCDS" id="CCDS33875.1">
    <molecule id="Q14527-1"/>
</dbReference>
<dbReference type="PIR" id="S49618">
    <property type="entry name" value="S49618"/>
</dbReference>
<dbReference type="RefSeq" id="NP_001305863.1">
    <property type="nucleotide sequence ID" value="NM_001318934.1"/>
</dbReference>
<dbReference type="RefSeq" id="NP_001305864.1">
    <molecule id="Q14527-1"/>
    <property type="nucleotide sequence ID" value="NM_001318935.2"/>
</dbReference>
<dbReference type="RefSeq" id="NP_003062.2">
    <molecule id="Q14527-1"/>
    <property type="nucleotide sequence ID" value="NM_003071.3"/>
</dbReference>
<dbReference type="RefSeq" id="NP_620636.1">
    <molecule id="Q14527-1"/>
    <property type="nucleotide sequence ID" value="NM_139048.3"/>
</dbReference>
<dbReference type="RefSeq" id="XP_016862568.1">
    <property type="nucleotide sequence ID" value="XM_017007079.1"/>
</dbReference>
<dbReference type="PDB" id="2MZN">
    <property type="method" value="NMR"/>
    <property type="chains" value="A=51-171"/>
</dbReference>
<dbReference type="PDB" id="4HRE">
    <property type="method" value="X-ray"/>
    <property type="resolution" value="2.79 A"/>
    <property type="chains" value="G/H/K/L=26-39"/>
</dbReference>
<dbReference type="PDB" id="4HRH">
    <property type="method" value="X-ray"/>
    <property type="resolution" value="3.00 A"/>
    <property type="chains" value="C/D=26-39"/>
</dbReference>
<dbReference type="PDB" id="4S0N">
    <property type="method" value="X-ray"/>
    <property type="resolution" value="1.50 A"/>
    <property type="chains" value="A/B/C/D=55-180"/>
</dbReference>
<dbReference type="PDB" id="4XZF">
    <property type="method" value="X-ray"/>
    <property type="resolution" value="1.38 A"/>
    <property type="chains" value="A=58-174"/>
</dbReference>
<dbReference type="PDB" id="4XZG">
    <property type="method" value="X-ray"/>
    <property type="resolution" value="2.40 A"/>
    <property type="chains" value="A/B/C/D/E/F/G/H/I=57-174"/>
</dbReference>
<dbReference type="PDB" id="5BNH">
    <property type="method" value="X-ray"/>
    <property type="resolution" value="1.70 A"/>
    <property type="chains" value="A/D=55-175"/>
</dbReference>
<dbReference type="PDB" id="5K5F">
    <property type="method" value="NMR"/>
    <property type="chains" value="A=51-171"/>
</dbReference>
<dbReference type="PDB" id="6KCS">
    <property type="method" value="X-ray"/>
    <property type="resolution" value="2.10 A"/>
    <property type="chains" value="A=58-174"/>
</dbReference>
<dbReference type="PDBsum" id="2MZN"/>
<dbReference type="PDBsum" id="4HRE"/>
<dbReference type="PDBsum" id="4HRH"/>
<dbReference type="PDBsum" id="4S0N"/>
<dbReference type="PDBsum" id="4XZF"/>
<dbReference type="PDBsum" id="4XZG"/>
<dbReference type="PDBsum" id="5BNH"/>
<dbReference type="PDBsum" id="5K5F"/>
<dbReference type="PDBsum" id="6KCS"/>
<dbReference type="BMRB" id="Q14527"/>
<dbReference type="SMR" id="Q14527"/>
<dbReference type="BioGRID" id="112480">
    <property type="interactions" value="170"/>
</dbReference>
<dbReference type="ComplexPortal" id="CPX-856">
    <property type="entry name" value="SMARCA3 - Annexin A2 - S100-A10 complex"/>
</dbReference>
<dbReference type="DIP" id="DIP-29828N"/>
<dbReference type="FunCoup" id="Q14527">
    <property type="interactions" value="2070"/>
</dbReference>
<dbReference type="IntAct" id="Q14527">
    <property type="interactions" value="78"/>
</dbReference>
<dbReference type="MINT" id="Q14527"/>
<dbReference type="STRING" id="9606.ENSP00000308944"/>
<dbReference type="GlyGen" id="Q14527">
    <property type="glycosylation" value="1 site, 1 O-linked glycan (1 site)"/>
</dbReference>
<dbReference type="iPTMnet" id="Q14527"/>
<dbReference type="PhosphoSitePlus" id="Q14527"/>
<dbReference type="BioMuta" id="HLTF"/>
<dbReference type="DMDM" id="60390864"/>
<dbReference type="jPOST" id="Q14527"/>
<dbReference type="MassIVE" id="Q14527"/>
<dbReference type="PaxDb" id="9606-ENSP00000308944"/>
<dbReference type="PeptideAtlas" id="Q14527"/>
<dbReference type="ProteomicsDB" id="60030">
    <molecule id="Q14527-1"/>
</dbReference>
<dbReference type="ProteomicsDB" id="60031">
    <molecule id="Q14527-2"/>
</dbReference>
<dbReference type="Pumba" id="Q14527"/>
<dbReference type="Antibodypedia" id="18197">
    <property type="antibodies" value="316 antibodies from 32 providers"/>
</dbReference>
<dbReference type="DNASU" id="6596"/>
<dbReference type="Ensembl" id="ENST00000310053.10">
    <molecule id="Q14527-1"/>
    <property type="protein sequence ID" value="ENSP00000308944.5"/>
    <property type="gene ID" value="ENSG00000071794.16"/>
</dbReference>
<dbReference type="Ensembl" id="ENST00000392912.6">
    <molecule id="Q14527-1"/>
    <property type="protein sequence ID" value="ENSP00000376644.2"/>
    <property type="gene ID" value="ENSG00000071794.16"/>
</dbReference>
<dbReference type="Ensembl" id="ENST00000494055.5">
    <molecule id="Q14527-1"/>
    <property type="protein sequence ID" value="ENSP00000420429.1"/>
    <property type="gene ID" value="ENSG00000071794.16"/>
</dbReference>
<dbReference type="GeneID" id="6596"/>
<dbReference type="KEGG" id="hsa:6596"/>
<dbReference type="MANE-Select" id="ENST00000310053.10">
    <property type="protein sequence ID" value="ENSP00000308944.5"/>
    <property type="RefSeq nucleotide sequence ID" value="NM_003071.4"/>
    <property type="RefSeq protein sequence ID" value="NP_003062.2"/>
</dbReference>
<dbReference type="UCSC" id="uc003ewq.2">
    <molecule id="Q14527-1"/>
    <property type="organism name" value="human"/>
</dbReference>
<dbReference type="AGR" id="HGNC:11099"/>
<dbReference type="CTD" id="6596"/>
<dbReference type="DisGeNET" id="6596"/>
<dbReference type="GeneCards" id="HLTF"/>
<dbReference type="HGNC" id="HGNC:11099">
    <property type="gene designation" value="HLTF"/>
</dbReference>
<dbReference type="HPA" id="ENSG00000071794">
    <property type="expression patterns" value="Low tissue specificity"/>
</dbReference>
<dbReference type="MIM" id="603257">
    <property type="type" value="gene"/>
</dbReference>
<dbReference type="neXtProt" id="NX_Q14527"/>
<dbReference type="OpenTargets" id="ENSG00000071794"/>
<dbReference type="PharmGKB" id="PA35949"/>
<dbReference type="VEuPathDB" id="HostDB:ENSG00000071794"/>
<dbReference type="eggNOG" id="KOG1001">
    <property type="taxonomic scope" value="Eukaryota"/>
</dbReference>
<dbReference type="GeneTree" id="ENSGT00910000144305"/>
<dbReference type="InParanoid" id="Q14527"/>
<dbReference type="OMA" id="ETTVWRL"/>
<dbReference type="OrthoDB" id="276744at2759"/>
<dbReference type="PAN-GO" id="Q14527">
    <property type="GO annotations" value="3 GO annotations based on evolutionary models"/>
</dbReference>
<dbReference type="PhylomeDB" id="Q14527"/>
<dbReference type="TreeFam" id="TF332703"/>
<dbReference type="PathwayCommons" id="Q14527"/>
<dbReference type="Reactome" id="R-HSA-8866654">
    <property type="pathway name" value="E3 ubiquitin ligases ubiquitinate target proteins"/>
</dbReference>
<dbReference type="SignaLink" id="Q14527"/>
<dbReference type="SIGNOR" id="Q14527"/>
<dbReference type="UniPathway" id="UPA00143"/>
<dbReference type="BioGRID-ORCS" id="6596">
    <property type="hits" value="12 hits in 1217 CRISPR screens"/>
</dbReference>
<dbReference type="CD-CODE" id="91857CE7">
    <property type="entry name" value="Nucleolus"/>
</dbReference>
<dbReference type="ChiTaRS" id="HLTF">
    <property type="organism name" value="human"/>
</dbReference>
<dbReference type="EvolutionaryTrace" id="Q14527"/>
<dbReference type="GeneWiki" id="HLTF"/>
<dbReference type="GenomeRNAi" id="6596"/>
<dbReference type="Pharos" id="Q14527">
    <property type="development level" value="Tbio"/>
</dbReference>
<dbReference type="PRO" id="PR:Q14527"/>
<dbReference type="Proteomes" id="UP000005640">
    <property type="component" value="Chromosome 3"/>
</dbReference>
<dbReference type="RNAct" id="Q14527">
    <property type="molecule type" value="protein"/>
</dbReference>
<dbReference type="Bgee" id="ENSG00000071794">
    <property type="expression patterns" value="Expressed in male germ line stem cell (sensu Vertebrata) in testis and 222 other cell types or tissues"/>
</dbReference>
<dbReference type="ExpressionAtlas" id="Q14527">
    <property type="expression patterns" value="baseline and differential"/>
</dbReference>
<dbReference type="GO" id="GO:0005737">
    <property type="term" value="C:cytoplasm"/>
    <property type="evidence" value="ECO:0007669"/>
    <property type="project" value="UniProtKB-SubCell"/>
</dbReference>
<dbReference type="GO" id="GO:0016020">
    <property type="term" value="C:membrane"/>
    <property type="evidence" value="ECO:0007005"/>
    <property type="project" value="UniProtKB"/>
</dbReference>
<dbReference type="GO" id="GO:0016363">
    <property type="term" value="C:nuclear matrix"/>
    <property type="evidence" value="ECO:0000303"/>
    <property type="project" value="ComplexPortal"/>
</dbReference>
<dbReference type="GO" id="GO:0005730">
    <property type="term" value="C:nucleolus"/>
    <property type="evidence" value="ECO:0007669"/>
    <property type="project" value="UniProtKB-SubCell"/>
</dbReference>
<dbReference type="GO" id="GO:0005654">
    <property type="term" value="C:nucleoplasm"/>
    <property type="evidence" value="ECO:0000314"/>
    <property type="project" value="HPA"/>
</dbReference>
<dbReference type="GO" id="GO:0005634">
    <property type="term" value="C:nucleus"/>
    <property type="evidence" value="ECO:0000318"/>
    <property type="project" value="GO_Central"/>
</dbReference>
<dbReference type="GO" id="GO:0005886">
    <property type="term" value="C:plasma membrane"/>
    <property type="evidence" value="ECO:0000303"/>
    <property type="project" value="ComplexPortal"/>
</dbReference>
<dbReference type="GO" id="GO:0090575">
    <property type="term" value="C:RNA polymerase II transcription regulator complex"/>
    <property type="evidence" value="ECO:0000269"/>
    <property type="project" value="ComplexPortal"/>
</dbReference>
<dbReference type="GO" id="GO:0005524">
    <property type="term" value="F:ATP binding"/>
    <property type="evidence" value="ECO:0007669"/>
    <property type="project" value="UniProtKB-KW"/>
</dbReference>
<dbReference type="GO" id="GO:0008094">
    <property type="term" value="F:ATP-dependent activity, acting on DNA"/>
    <property type="evidence" value="ECO:0000318"/>
    <property type="project" value="GO_Central"/>
</dbReference>
<dbReference type="GO" id="GO:0003677">
    <property type="term" value="F:DNA binding"/>
    <property type="evidence" value="ECO:0000304"/>
    <property type="project" value="ProtInc"/>
</dbReference>
<dbReference type="GO" id="GO:0004386">
    <property type="term" value="F:helicase activity"/>
    <property type="evidence" value="ECO:0007669"/>
    <property type="project" value="UniProtKB-KW"/>
</dbReference>
<dbReference type="GO" id="GO:0016818">
    <property type="term" value="F:hydrolase activity, acting on acid anhydrides, in phosphorus-containing anhydrides"/>
    <property type="evidence" value="ECO:0007669"/>
    <property type="project" value="InterPro"/>
</dbReference>
<dbReference type="GO" id="GO:0003723">
    <property type="term" value="F:RNA binding"/>
    <property type="evidence" value="ECO:0007005"/>
    <property type="project" value="UniProtKB"/>
</dbReference>
<dbReference type="GO" id="GO:0061630">
    <property type="term" value="F:ubiquitin protein ligase activity"/>
    <property type="evidence" value="ECO:0000269"/>
    <property type="project" value="Reactome"/>
</dbReference>
<dbReference type="GO" id="GO:0031625">
    <property type="term" value="F:ubiquitin protein ligase binding"/>
    <property type="evidence" value="ECO:0000314"/>
    <property type="project" value="MGI"/>
</dbReference>
<dbReference type="GO" id="GO:0008270">
    <property type="term" value="F:zinc ion binding"/>
    <property type="evidence" value="ECO:0007669"/>
    <property type="project" value="UniProtKB-KW"/>
</dbReference>
<dbReference type="GO" id="GO:0006325">
    <property type="term" value="P:chromatin organization"/>
    <property type="evidence" value="ECO:0007669"/>
    <property type="project" value="UniProtKB-KW"/>
</dbReference>
<dbReference type="GO" id="GO:0006281">
    <property type="term" value="P:DNA repair"/>
    <property type="evidence" value="ECO:0000318"/>
    <property type="project" value="GO_Central"/>
</dbReference>
<dbReference type="GO" id="GO:0042789">
    <property type="term" value="P:mRNA transcription by RNA polymerase II"/>
    <property type="evidence" value="ECO:0000266"/>
    <property type="project" value="ComplexPortal"/>
</dbReference>
<dbReference type="GO" id="GO:0045944">
    <property type="term" value="P:positive regulation of transcription by RNA polymerase II"/>
    <property type="evidence" value="ECO:0000266"/>
    <property type="project" value="ComplexPortal"/>
</dbReference>
<dbReference type="GO" id="GO:0016567">
    <property type="term" value="P:protein ubiquitination"/>
    <property type="evidence" value="ECO:0000304"/>
    <property type="project" value="Reactome"/>
</dbReference>
<dbReference type="GO" id="GO:0050767">
    <property type="term" value="P:regulation of neurogenesis"/>
    <property type="evidence" value="ECO:0000266"/>
    <property type="project" value="ComplexPortal"/>
</dbReference>
<dbReference type="CDD" id="cd18071">
    <property type="entry name" value="DEXHc_HLTF1_SMARC3"/>
    <property type="match status" value="1"/>
</dbReference>
<dbReference type="CDD" id="cd16509">
    <property type="entry name" value="RING-HC_HLTF"/>
    <property type="match status" value="1"/>
</dbReference>
<dbReference type="CDD" id="cd18793">
    <property type="entry name" value="SF2_C_SNF"/>
    <property type="match status" value="1"/>
</dbReference>
<dbReference type="FunFam" id="3.40.50.10810:FF:000023">
    <property type="entry name" value="helicase-like transcription factor isoform X1"/>
    <property type="match status" value="1"/>
</dbReference>
<dbReference type="FunFam" id="3.30.40.10:FF:000271">
    <property type="entry name" value="helicase-like transcription factor isoform X2"/>
    <property type="match status" value="1"/>
</dbReference>
<dbReference type="FunFam" id="3.30.70.2330:FF:000001">
    <property type="entry name" value="helicase-like transcription factor isoform X2"/>
    <property type="match status" value="1"/>
</dbReference>
<dbReference type="FunFam" id="3.40.50.10810:FF:000027">
    <property type="entry name" value="helicase-like transcription factor isoform X3"/>
    <property type="match status" value="1"/>
</dbReference>
<dbReference type="Gene3D" id="3.30.70.2330">
    <property type="match status" value="1"/>
</dbReference>
<dbReference type="Gene3D" id="3.40.50.300">
    <property type="entry name" value="P-loop containing nucleotide triphosphate hydrolases"/>
    <property type="match status" value="1"/>
</dbReference>
<dbReference type="Gene3D" id="3.40.50.10810">
    <property type="entry name" value="Tandem AAA-ATPase domain"/>
    <property type="match status" value="2"/>
</dbReference>
<dbReference type="Gene3D" id="3.30.40.10">
    <property type="entry name" value="Zinc/RING finger domain, C3HC4 (zinc finger)"/>
    <property type="match status" value="1"/>
</dbReference>
<dbReference type="IDEAL" id="IID00724"/>
<dbReference type="InterPro" id="IPR014001">
    <property type="entry name" value="Helicase_ATP-bd"/>
</dbReference>
<dbReference type="InterPro" id="IPR001650">
    <property type="entry name" value="Helicase_C-like"/>
</dbReference>
<dbReference type="InterPro" id="IPR014905">
    <property type="entry name" value="HIRAN"/>
</dbReference>
<dbReference type="InterPro" id="IPR027417">
    <property type="entry name" value="P-loop_NTPase"/>
</dbReference>
<dbReference type="InterPro" id="IPR038718">
    <property type="entry name" value="SNF2-like_sf"/>
</dbReference>
<dbReference type="InterPro" id="IPR049730">
    <property type="entry name" value="SNF2/RAD54-like_C"/>
</dbReference>
<dbReference type="InterPro" id="IPR000330">
    <property type="entry name" value="SNF2_N"/>
</dbReference>
<dbReference type="InterPro" id="IPR050628">
    <property type="entry name" value="SNF2_RAD54_helicase_TF"/>
</dbReference>
<dbReference type="InterPro" id="IPR001841">
    <property type="entry name" value="Znf_RING"/>
</dbReference>
<dbReference type="InterPro" id="IPR013083">
    <property type="entry name" value="Znf_RING/FYVE/PHD"/>
</dbReference>
<dbReference type="InterPro" id="IPR017907">
    <property type="entry name" value="Znf_RING_CS"/>
</dbReference>
<dbReference type="PANTHER" id="PTHR45626:SF17">
    <property type="entry name" value="HELICASE-LIKE TRANSCRIPTION FACTOR"/>
    <property type="match status" value="1"/>
</dbReference>
<dbReference type="PANTHER" id="PTHR45626">
    <property type="entry name" value="TRANSCRIPTION TERMINATION FACTOR 2-RELATED"/>
    <property type="match status" value="1"/>
</dbReference>
<dbReference type="Pfam" id="PF00271">
    <property type="entry name" value="Helicase_C"/>
    <property type="match status" value="1"/>
</dbReference>
<dbReference type="Pfam" id="PF08797">
    <property type="entry name" value="HIRAN"/>
    <property type="match status" value="1"/>
</dbReference>
<dbReference type="Pfam" id="PF00176">
    <property type="entry name" value="SNF2-rel_dom"/>
    <property type="match status" value="1"/>
</dbReference>
<dbReference type="Pfam" id="PF13923">
    <property type="entry name" value="zf-C3HC4_2"/>
    <property type="match status" value="1"/>
</dbReference>
<dbReference type="SMART" id="SM00487">
    <property type="entry name" value="DEXDc"/>
    <property type="match status" value="1"/>
</dbReference>
<dbReference type="SMART" id="SM00490">
    <property type="entry name" value="HELICc"/>
    <property type="match status" value="1"/>
</dbReference>
<dbReference type="SMART" id="SM00910">
    <property type="entry name" value="HIRAN"/>
    <property type="match status" value="1"/>
</dbReference>
<dbReference type="SMART" id="SM00184">
    <property type="entry name" value="RING"/>
    <property type="match status" value="1"/>
</dbReference>
<dbReference type="SUPFAM" id="SSF52540">
    <property type="entry name" value="P-loop containing nucleoside triphosphate hydrolases"/>
    <property type="match status" value="2"/>
</dbReference>
<dbReference type="SUPFAM" id="SSF57850">
    <property type="entry name" value="RING/U-box"/>
    <property type="match status" value="1"/>
</dbReference>
<dbReference type="PROSITE" id="PS51192">
    <property type="entry name" value="HELICASE_ATP_BIND_1"/>
    <property type="match status" value="1"/>
</dbReference>
<dbReference type="PROSITE" id="PS51194">
    <property type="entry name" value="HELICASE_CTER"/>
    <property type="match status" value="1"/>
</dbReference>
<dbReference type="PROSITE" id="PS00518">
    <property type="entry name" value="ZF_RING_1"/>
    <property type="match status" value="1"/>
</dbReference>
<dbReference type="PROSITE" id="PS50089">
    <property type="entry name" value="ZF_RING_2"/>
    <property type="match status" value="1"/>
</dbReference>
<evidence type="ECO:0000250" key="1"/>
<evidence type="ECO:0000255" key="2">
    <source>
        <dbReference type="PROSITE-ProRule" id="PRU00175"/>
    </source>
</evidence>
<evidence type="ECO:0000255" key="3">
    <source>
        <dbReference type="PROSITE-ProRule" id="PRU00541"/>
    </source>
</evidence>
<evidence type="ECO:0000255" key="4">
    <source>
        <dbReference type="PROSITE-ProRule" id="PRU00542"/>
    </source>
</evidence>
<evidence type="ECO:0000256" key="5">
    <source>
        <dbReference type="SAM" id="MobiDB-lite"/>
    </source>
</evidence>
<evidence type="ECO:0000269" key="6">
    <source>
    </source>
</evidence>
<evidence type="ECO:0000269" key="7">
    <source>
    </source>
</evidence>
<evidence type="ECO:0000269" key="8">
    <source>
    </source>
</evidence>
<evidence type="ECO:0000269" key="9">
    <source>
    </source>
</evidence>
<evidence type="ECO:0000269" key="10">
    <source>
    </source>
</evidence>
<evidence type="ECO:0000269" key="11">
    <source>
    </source>
</evidence>
<evidence type="ECO:0000269" key="12">
    <source>
    </source>
</evidence>
<evidence type="ECO:0000303" key="13">
    <source>
    </source>
</evidence>
<evidence type="ECO:0000305" key="14"/>
<evidence type="ECO:0007744" key="15">
    <source>
    </source>
</evidence>
<evidence type="ECO:0007744" key="16">
    <source>
    </source>
</evidence>
<evidence type="ECO:0007744" key="17">
    <source>
    </source>
</evidence>
<evidence type="ECO:0007829" key="18">
    <source>
        <dbReference type="PDB" id="2MZN"/>
    </source>
</evidence>
<evidence type="ECO:0007829" key="19">
    <source>
        <dbReference type="PDB" id="4XZF"/>
    </source>
</evidence>
<feature type="chain" id="PRO_0000030722" description="Helicase-like transcription factor">
    <location>
        <begin position="1"/>
        <end position="1009"/>
    </location>
</feature>
<feature type="domain" description="Helicase ATP-binding" evidence="3">
    <location>
        <begin position="435"/>
        <end position="606"/>
    </location>
</feature>
<feature type="domain" description="Helicase C-terminal" evidence="4">
    <location>
        <begin position="837"/>
        <end position="996"/>
    </location>
</feature>
<feature type="DNA-binding region">
    <location>
        <begin position="38"/>
        <end position="287"/>
    </location>
</feature>
<feature type="zinc finger region" description="RING-type" evidence="2">
    <location>
        <begin position="760"/>
        <end position="801"/>
    </location>
</feature>
<feature type="region of interest" description="Disordered" evidence="5">
    <location>
        <begin position="336"/>
        <end position="365"/>
    </location>
</feature>
<feature type="region of interest" description="Interaction with SP1 and SP3" evidence="6">
    <location>
        <begin position="925"/>
        <end position="1009"/>
    </location>
</feature>
<feature type="short sequence motif" description="DEGH box">
    <location>
        <begin position="557"/>
        <end position="560"/>
    </location>
</feature>
<feature type="compositionally biased region" description="Basic and acidic residues" evidence="5">
    <location>
        <begin position="348"/>
        <end position="359"/>
    </location>
</feature>
<feature type="binding site" evidence="3">
    <location>
        <begin position="294"/>
        <end position="301"/>
    </location>
    <ligand>
        <name>ATP</name>
        <dbReference type="ChEBI" id="CHEBI:30616"/>
    </ligand>
</feature>
<feature type="modified residue" description="Omega-N-methylarginine" evidence="16">
    <location>
        <position position="27"/>
    </location>
</feature>
<feature type="modified residue" description="Phosphotyrosine; by JAK2" evidence="9">
    <location>
        <position position="195"/>
    </location>
</feature>
<feature type="modified residue" description="Phosphoserine" evidence="15">
    <location>
        <position position="397"/>
    </location>
</feature>
<feature type="modified residue" description="Phosphoserine" evidence="15">
    <location>
        <position position="398"/>
    </location>
</feature>
<feature type="modified residue" description="Phosphoserine" evidence="15">
    <location>
        <position position="400"/>
    </location>
</feature>
<feature type="modified residue" description="Phosphothreonine" evidence="15">
    <location>
        <position position="736"/>
    </location>
</feature>
<feature type="cross-link" description="Glycyl lysine isopeptide (Lys-Gly) (interchain with G-Cter in SUMO2)" evidence="17">
    <location>
        <position position="112"/>
    </location>
</feature>
<feature type="cross-link" description="Glycyl lysine isopeptide (Lys-Gly) (interchain with G-Cter in SUMO2)" evidence="17">
    <location>
        <position position="211"/>
    </location>
</feature>
<feature type="splice variant" id="VSP_018873" description="In isoform 2." evidence="13">
    <location>
        <begin position="1"/>
        <end position="122"/>
    </location>
</feature>
<feature type="sequence variant" id="VAR_052121" description="In dbSNP:rs2305868.">
    <original>N</original>
    <variation>S</variation>
    <location>
        <position position="311"/>
    </location>
</feature>
<feature type="sequence variant" id="VAR_052122" description="In dbSNP:rs2228257.">
    <original>E</original>
    <variation>Q</variation>
    <location>
        <position position="362"/>
    </location>
</feature>
<feature type="sequence variant" id="VAR_029265" description="In dbSNP:rs2229361.">
    <original>R</original>
    <variation>H</variation>
    <location>
        <position position="819"/>
    </location>
</feature>
<feature type="sequence conflict" description="In Ref. 2; CAA86571." evidence="14" ref="2">
    <original>P</original>
    <variation>L</variation>
    <location>
        <position position="35"/>
    </location>
</feature>
<feature type="sequence conflict" description="In Ref. 6; AAB27691." evidence="14" ref="6">
    <original>KTE</original>
    <variation>PEF</variation>
    <location>
        <begin position="211"/>
        <end position="213"/>
    </location>
</feature>
<feature type="sequence conflict" description="In Ref. 2; CAA86571/CAA86572 and 3; CAD10805." evidence="14" ref="2 3">
    <original>D</original>
    <variation>G</variation>
    <location>
        <position position="337"/>
    </location>
</feature>
<feature type="sequence conflict" description="In Ref. 1; AAA67436." evidence="14" ref="1">
    <original>S</original>
    <variation>T</variation>
    <location>
        <position position="382"/>
    </location>
</feature>
<feature type="sequence conflict" description="In Ref. 5; AAH44659." evidence="14" ref="5">
    <location>
        <position position="429"/>
    </location>
</feature>
<feature type="sequence conflict" description="In Ref. 2; CAA86571/CAA86572 and 3; CAD10805." evidence="14" ref="2 3">
    <original>K</original>
    <variation>R</variation>
    <location>
        <position position="913"/>
    </location>
</feature>
<feature type="helix" evidence="18">
    <location>
        <begin position="51"/>
        <end position="54"/>
    </location>
</feature>
<feature type="strand" evidence="19">
    <location>
        <begin position="58"/>
        <end position="68"/>
    </location>
</feature>
<feature type="helix" evidence="19">
    <location>
        <begin position="70"/>
        <end position="72"/>
    </location>
</feature>
<feature type="strand" evidence="19">
    <location>
        <begin position="81"/>
        <end position="87"/>
    </location>
</feature>
<feature type="strand" evidence="19">
    <location>
        <begin position="98"/>
        <end position="101"/>
    </location>
</feature>
<feature type="strand" evidence="19">
    <location>
        <begin position="107"/>
        <end position="111"/>
    </location>
</feature>
<feature type="helix" evidence="19">
    <location>
        <begin position="113"/>
        <end position="124"/>
    </location>
</feature>
<feature type="strand" evidence="19">
    <location>
        <begin position="129"/>
        <end position="134"/>
    </location>
</feature>
<feature type="strand" evidence="19">
    <location>
        <begin position="141"/>
        <end position="152"/>
    </location>
</feature>
<feature type="helix" evidence="19">
    <location>
        <begin position="154"/>
        <end position="156"/>
    </location>
</feature>
<feature type="helix" evidence="19">
    <location>
        <begin position="157"/>
        <end position="166"/>
    </location>
</feature>